<sequence length="379" mass="41252">MSKRDYYEVLGVEKSASERDIKKAYKRLAMKYHPDRTQGDKAMEEKFKEVQEAYEILTDSQKRAAYDQYGHAGVDPNRGHGGGHGAGDFGDIFGDVFGDIFGGGRGGGRQSRAARGSDLRYNLELSLEEAVRGKSVEIRVPTLAECDTCDGSGAKKGSSAKTCTTCHGQGQVQMRQGFFAVQQACPTCGGKGKIITDPCDVCHGQGRVEKTKTLSVKVPAGVDTGDRIRLSNEGEAGENGAPAGDLYVQVHVKQHKIFERDGNNLYCEVPLSFTRAAIGGEIEVPTLEGKVKLKVTPETQTGKMFRLRNKGVKSVRSGSVGDLICKVVIETPVNLNSRQKELLQELEESMGKGKETAKNRPKESGFFDGVKKFFDDLTN</sequence>
<keyword id="KW-0143">Chaperone</keyword>
<keyword id="KW-0963">Cytoplasm</keyword>
<keyword id="KW-0235">DNA replication</keyword>
<keyword id="KW-0479">Metal-binding</keyword>
<keyword id="KW-0677">Repeat</keyword>
<keyword id="KW-0346">Stress response</keyword>
<keyword id="KW-0862">Zinc</keyword>
<keyword id="KW-0863">Zinc-finger</keyword>
<feature type="chain" id="PRO_1000085247" description="Chaperone protein DnaJ">
    <location>
        <begin position="1"/>
        <end position="379"/>
    </location>
</feature>
<feature type="domain" description="J" evidence="1">
    <location>
        <begin position="5"/>
        <end position="70"/>
    </location>
</feature>
<feature type="repeat" description="CXXCXGXG motif">
    <location>
        <begin position="146"/>
        <end position="153"/>
    </location>
</feature>
<feature type="repeat" description="CXXCXGXG motif">
    <location>
        <begin position="163"/>
        <end position="170"/>
    </location>
</feature>
<feature type="repeat" description="CXXCXGXG motif">
    <location>
        <begin position="185"/>
        <end position="192"/>
    </location>
</feature>
<feature type="repeat" description="CXXCXGXG motif">
    <location>
        <begin position="199"/>
        <end position="206"/>
    </location>
</feature>
<feature type="zinc finger region" description="CR-type" evidence="1">
    <location>
        <begin position="133"/>
        <end position="211"/>
    </location>
</feature>
<feature type="binding site" evidence="1">
    <location>
        <position position="146"/>
    </location>
    <ligand>
        <name>Zn(2+)</name>
        <dbReference type="ChEBI" id="CHEBI:29105"/>
        <label>1</label>
    </ligand>
</feature>
<feature type="binding site" evidence="1">
    <location>
        <position position="149"/>
    </location>
    <ligand>
        <name>Zn(2+)</name>
        <dbReference type="ChEBI" id="CHEBI:29105"/>
        <label>1</label>
    </ligand>
</feature>
<feature type="binding site" evidence="1">
    <location>
        <position position="163"/>
    </location>
    <ligand>
        <name>Zn(2+)</name>
        <dbReference type="ChEBI" id="CHEBI:29105"/>
        <label>2</label>
    </ligand>
</feature>
<feature type="binding site" evidence="1">
    <location>
        <position position="166"/>
    </location>
    <ligand>
        <name>Zn(2+)</name>
        <dbReference type="ChEBI" id="CHEBI:29105"/>
        <label>2</label>
    </ligand>
</feature>
<feature type="binding site" evidence="1">
    <location>
        <position position="185"/>
    </location>
    <ligand>
        <name>Zn(2+)</name>
        <dbReference type="ChEBI" id="CHEBI:29105"/>
        <label>2</label>
    </ligand>
</feature>
<feature type="binding site" evidence="1">
    <location>
        <position position="188"/>
    </location>
    <ligand>
        <name>Zn(2+)</name>
        <dbReference type="ChEBI" id="CHEBI:29105"/>
        <label>2</label>
    </ligand>
</feature>
<feature type="binding site" evidence="1">
    <location>
        <position position="199"/>
    </location>
    <ligand>
        <name>Zn(2+)</name>
        <dbReference type="ChEBI" id="CHEBI:29105"/>
        <label>1</label>
    </ligand>
</feature>
<feature type="binding site" evidence="1">
    <location>
        <position position="202"/>
    </location>
    <ligand>
        <name>Zn(2+)</name>
        <dbReference type="ChEBI" id="CHEBI:29105"/>
        <label>1</label>
    </ligand>
</feature>
<comment type="function">
    <text evidence="1">Participates actively in the response to hyperosmotic and heat shock by preventing the aggregation of stress-denatured proteins and by disaggregating proteins, also in an autonomous, DnaK-independent fashion. Unfolded proteins bind initially to DnaJ; upon interaction with the DnaJ-bound protein, DnaK hydrolyzes its bound ATP, resulting in the formation of a stable complex. GrpE releases ADP from DnaK; ATP binding to DnaK triggers the release of the substrate protein, thus completing the reaction cycle. Several rounds of ATP-dependent interactions between DnaJ, DnaK and GrpE are required for fully efficient folding. Also involved, together with DnaK and GrpE, in the DNA replication of plasmids through activation of initiation proteins.</text>
</comment>
<comment type="cofactor">
    <cofactor evidence="1">
        <name>Zn(2+)</name>
        <dbReference type="ChEBI" id="CHEBI:29105"/>
    </cofactor>
    <text evidence="1">Binds 2 Zn(2+) ions per monomer.</text>
</comment>
<comment type="subunit">
    <text evidence="1">Homodimer.</text>
</comment>
<comment type="subcellular location">
    <subcellularLocation>
        <location evidence="1">Cytoplasm</location>
    </subcellularLocation>
</comment>
<comment type="domain">
    <text evidence="1">The J domain is necessary and sufficient to stimulate DnaK ATPase activity. Zinc center 1 plays an important role in the autonomous, DnaK-independent chaperone activity of DnaJ. Zinc center 2 is essential for interaction with DnaK and for DnaJ activity.</text>
</comment>
<comment type="similarity">
    <text evidence="1">Belongs to the DnaJ family.</text>
</comment>
<organism>
    <name type="scientific">Pseudoalteromonas atlantica (strain T6c / ATCC BAA-1087)</name>
    <dbReference type="NCBI Taxonomy" id="3042615"/>
    <lineage>
        <taxon>Bacteria</taxon>
        <taxon>Pseudomonadati</taxon>
        <taxon>Pseudomonadota</taxon>
        <taxon>Gammaproteobacteria</taxon>
        <taxon>Alteromonadales</taxon>
        <taxon>Alteromonadaceae</taxon>
        <taxon>Paraglaciecola</taxon>
    </lineage>
</organism>
<accession>Q15UD2</accession>
<protein>
    <recommendedName>
        <fullName evidence="1">Chaperone protein DnaJ</fullName>
    </recommendedName>
</protein>
<proteinExistence type="inferred from homology"/>
<reference key="1">
    <citation type="submission" date="2006-06" db="EMBL/GenBank/DDBJ databases">
        <title>Complete sequence of Pseudoalteromonas atlantica T6c.</title>
        <authorList>
            <consortium name="US DOE Joint Genome Institute"/>
            <person name="Copeland A."/>
            <person name="Lucas S."/>
            <person name="Lapidus A."/>
            <person name="Barry K."/>
            <person name="Detter J.C."/>
            <person name="Glavina del Rio T."/>
            <person name="Hammon N."/>
            <person name="Israni S."/>
            <person name="Dalin E."/>
            <person name="Tice H."/>
            <person name="Pitluck S."/>
            <person name="Saunders E."/>
            <person name="Brettin T."/>
            <person name="Bruce D."/>
            <person name="Han C."/>
            <person name="Tapia R."/>
            <person name="Gilna P."/>
            <person name="Schmutz J."/>
            <person name="Larimer F."/>
            <person name="Land M."/>
            <person name="Hauser L."/>
            <person name="Kyrpides N."/>
            <person name="Kim E."/>
            <person name="Karls A.C."/>
            <person name="Bartlett D."/>
            <person name="Higgins B.P."/>
            <person name="Richardson P."/>
        </authorList>
    </citation>
    <scope>NUCLEOTIDE SEQUENCE [LARGE SCALE GENOMIC DNA]</scope>
    <source>
        <strain>T6c / ATCC BAA-1087</strain>
    </source>
</reference>
<name>DNAJ_PSEA6</name>
<dbReference type="EMBL" id="CP000388">
    <property type="protein sequence ID" value="ABG40506.1"/>
    <property type="molecule type" value="Genomic_DNA"/>
</dbReference>
<dbReference type="RefSeq" id="WP_011574801.1">
    <property type="nucleotide sequence ID" value="NC_008228.1"/>
</dbReference>
<dbReference type="SMR" id="Q15UD2"/>
<dbReference type="STRING" id="342610.Patl_1988"/>
<dbReference type="KEGG" id="pat:Patl_1988"/>
<dbReference type="eggNOG" id="COG0484">
    <property type="taxonomic scope" value="Bacteria"/>
</dbReference>
<dbReference type="HOGENOM" id="CLU_017633_0_7_6"/>
<dbReference type="OrthoDB" id="9779889at2"/>
<dbReference type="Proteomes" id="UP000001981">
    <property type="component" value="Chromosome"/>
</dbReference>
<dbReference type="GO" id="GO:0005737">
    <property type="term" value="C:cytoplasm"/>
    <property type="evidence" value="ECO:0007669"/>
    <property type="project" value="UniProtKB-SubCell"/>
</dbReference>
<dbReference type="GO" id="GO:0005524">
    <property type="term" value="F:ATP binding"/>
    <property type="evidence" value="ECO:0007669"/>
    <property type="project" value="InterPro"/>
</dbReference>
<dbReference type="GO" id="GO:0031072">
    <property type="term" value="F:heat shock protein binding"/>
    <property type="evidence" value="ECO:0007669"/>
    <property type="project" value="InterPro"/>
</dbReference>
<dbReference type="GO" id="GO:0051082">
    <property type="term" value="F:unfolded protein binding"/>
    <property type="evidence" value="ECO:0007669"/>
    <property type="project" value="UniProtKB-UniRule"/>
</dbReference>
<dbReference type="GO" id="GO:0008270">
    <property type="term" value="F:zinc ion binding"/>
    <property type="evidence" value="ECO:0007669"/>
    <property type="project" value="UniProtKB-UniRule"/>
</dbReference>
<dbReference type="GO" id="GO:0051085">
    <property type="term" value="P:chaperone cofactor-dependent protein refolding"/>
    <property type="evidence" value="ECO:0007669"/>
    <property type="project" value="TreeGrafter"/>
</dbReference>
<dbReference type="GO" id="GO:0006260">
    <property type="term" value="P:DNA replication"/>
    <property type="evidence" value="ECO:0007669"/>
    <property type="project" value="UniProtKB-KW"/>
</dbReference>
<dbReference type="GO" id="GO:0042026">
    <property type="term" value="P:protein refolding"/>
    <property type="evidence" value="ECO:0007669"/>
    <property type="project" value="TreeGrafter"/>
</dbReference>
<dbReference type="GO" id="GO:0009408">
    <property type="term" value="P:response to heat"/>
    <property type="evidence" value="ECO:0007669"/>
    <property type="project" value="InterPro"/>
</dbReference>
<dbReference type="CDD" id="cd06257">
    <property type="entry name" value="DnaJ"/>
    <property type="match status" value="1"/>
</dbReference>
<dbReference type="CDD" id="cd10747">
    <property type="entry name" value="DnaJ_C"/>
    <property type="match status" value="1"/>
</dbReference>
<dbReference type="CDD" id="cd10719">
    <property type="entry name" value="DnaJ_zf"/>
    <property type="match status" value="1"/>
</dbReference>
<dbReference type="FunFam" id="1.10.287.110:FF:000034">
    <property type="entry name" value="Chaperone protein DnaJ"/>
    <property type="match status" value="1"/>
</dbReference>
<dbReference type="FunFam" id="2.10.230.10:FF:000002">
    <property type="entry name" value="Molecular chaperone DnaJ"/>
    <property type="match status" value="1"/>
</dbReference>
<dbReference type="FunFam" id="2.60.260.20:FF:000004">
    <property type="entry name" value="Molecular chaperone DnaJ"/>
    <property type="match status" value="1"/>
</dbReference>
<dbReference type="Gene3D" id="1.10.287.110">
    <property type="entry name" value="DnaJ domain"/>
    <property type="match status" value="1"/>
</dbReference>
<dbReference type="Gene3D" id="2.10.230.10">
    <property type="entry name" value="Heat shock protein DnaJ, cysteine-rich domain"/>
    <property type="match status" value="1"/>
</dbReference>
<dbReference type="Gene3D" id="2.60.260.20">
    <property type="entry name" value="Urease metallochaperone UreE, N-terminal domain"/>
    <property type="match status" value="2"/>
</dbReference>
<dbReference type="HAMAP" id="MF_01152">
    <property type="entry name" value="DnaJ"/>
    <property type="match status" value="1"/>
</dbReference>
<dbReference type="InterPro" id="IPR012724">
    <property type="entry name" value="DnaJ"/>
</dbReference>
<dbReference type="InterPro" id="IPR002939">
    <property type="entry name" value="DnaJ_C"/>
</dbReference>
<dbReference type="InterPro" id="IPR001623">
    <property type="entry name" value="DnaJ_domain"/>
</dbReference>
<dbReference type="InterPro" id="IPR018253">
    <property type="entry name" value="DnaJ_domain_CS"/>
</dbReference>
<dbReference type="InterPro" id="IPR008971">
    <property type="entry name" value="HSP40/DnaJ_pept-bd"/>
</dbReference>
<dbReference type="InterPro" id="IPR001305">
    <property type="entry name" value="HSP_DnaJ_Cys-rich_dom"/>
</dbReference>
<dbReference type="InterPro" id="IPR036410">
    <property type="entry name" value="HSP_DnaJ_Cys-rich_dom_sf"/>
</dbReference>
<dbReference type="InterPro" id="IPR036869">
    <property type="entry name" value="J_dom_sf"/>
</dbReference>
<dbReference type="NCBIfam" id="TIGR02349">
    <property type="entry name" value="DnaJ_bact"/>
    <property type="match status" value="1"/>
</dbReference>
<dbReference type="NCBIfam" id="NF008035">
    <property type="entry name" value="PRK10767.1"/>
    <property type="match status" value="1"/>
</dbReference>
<dbReference type="PANTHER" id="PTHR43096:SF48">
    <property type="entry name" value="CHAPERONE PROTEIN DNAJ"/>
    <property type="match status" value="1"/>
</dbReference>
<dbReference type="PANTHER" id="PTHR43096">
    <property type="entry name" value="DNAJ HOMOLOG 1, MITOCHONDRIAL-RELATED"/>
    <property type="match status" value="1"/>
</dbReference>
<dbReference type="Pfam" id="PF00226">
    <property type="entry name" value="DnaJ"/>
    <property type="match status" value="1"/>
</dbReference>
<dbReference type="Pfam" id="PF01556">
    <property type="entry name" value="DnaJ_C"/>
    <property type="match status" value="1"/>
</dbReference>
<dbReference type="Pfam" id="PF00684">
    <property type="entry name" value="DnaJ_CXXCXGXG"/>
    <property type="match status" value="1"/>
</dbReference>
<dbReference type="PRINTS" id="PR00625">
    <property type="entry name" value="JDOMAIN"/>
</dbReference>
<dbReference type="SMART" id="SM00271">
    <property type="entry name" value="DnaJ"/>
    <property type="match status" value="1"/>
</dbReference>
<dbReference type="SUPFAM" id="SSF46565">
    <property type="entry name" value="Chaperone J-domain"/>
    <property type="match status" value="1"/>
</dbReference>
<dbReference type="SUPFAM" id="SSF57938">
    <property type="entry name" value="DnaJ/Hsp40 cysteine-rich domain"/>
    <property type="match status" value="1"/>
</dbReference>
<dbReference type="SUPFAM" id="SSF49493">
    <property type="entry name" value="HSP40/DnaJ peptide-binding domain"/>
    <property type="match status" value="2"/>
</dbReference>
<dbReference type="PROSITE" id="PS00636">
    <property type="entry name" value="DNAJ_1"/>
    <property type="match status" value="1"/>
</dbReference>
<dbReference type="PROSITE" id="PS50076">
    <property type="entry name" value="DNAJ_2"/>
    <property type="match status" value="1"/>
</dbReference>
<dbReference type="PROSITE" id="PS51188">
    <property type="entry name" value="ZF_CR"/>
    <property type="match status" value="1"/>
</dbReference>
<gene>
    <name evidence="1" type="primary">dnaJ</name>
    <name type="ordered locus">Patl_1988</name>
</gene>
<evidence type="ECO:0000255" key="1">
    <source>
        <dbReference type="HAMAP-Rule" id="MF_01152"/>
    </source>
</evidence>